<dbReference type="EC" id="1.17.7.4" evidence="1"/>
<dbReference type="EMBL" id="AE016879">
    <property type="protein sequence ID" value="AAP28221.1"/>
    <property type="molecule type" value="Genomic_DNA"/>
</dbReference>
<dbReference type="EMBL" id="AE017334">
    <property type="protein sequence ID" value="AAT33631.1"/>
    <property type="molecule type" value="Genomic_DNA"/>
</dbReference>
<dbReference type="EMBL" id="AE017225">
    <property type="protein sequence ID" value="AAT56489.1"/>
    <property type="molecule type" value="Genomic_DNA"/>
</dbReference>
<dbReference type="RefSeq" id="NP_846735.1">
    <property type="nucleotide sequence ID" value="NC_003997.3"/>
</dbReference>
<dbReference type="RefSeq" id="WP_000706669.1">
    <property type="nucleotide sequence ID" value="NZ_WXXJ01000027.1"/>
</dbReference>
<dbReference type="RefSeq" id="YP_030438.1">
    <property type="nucleotide sequence ID" value="NC_005945.1"/>
</dbReference>
<dbReference type="SMR" id="Q81LU9"/>
<dbReference type="IntAct" id="Q81LU9">
    <property type="interactions" value="1"/>
</dbReference>
<dbReference type="STRING" id="261594.GBAA_4511"/>
<dbReference type="DNASU" id="1088236"/>
<dbReference type="KEGG" id="ban:BA_4511"/>
<dbReference type="KEGG" id="bar:GBAA_4511"/>
<dbReference type="KEGG" id="bat:BAS4190"/>
<dbReference type="PATRIC" id="fig|198094.11.peg.4480"/>
<dbReference type="eggNOG" id="COG0761">
    <property type="taxonomic scope" value="Bacteria"/>
</dbReference>
<dbReference type="HOGENOM" id="CLU_027486_0_0_9"/>
<dbReference type="OMA" id="SEMIHNP"/>
<dbReference type="OrthoDB" id="9777362at2"/>
<dbReference type="UniPathway" id="UPA00056">
    <property type="reaction ID" value="UER00097"/>
</dbReference>
<dbReference type="UniPathway" id="UPA00059">
    <property type="reaction ID" value="UER00105"/>
</dbReference>
<dbReference type="Proteomes" id="UP000000427">
    <property type="component" value="Chromosome"/>
</dbReference>
<dbReference type="Proteomes" id="UP000000594">
    <property type="component" value="Chromosome"/>
</dbReference>
<dbReference type="GO" id="GO:0051539">
    <property type="term" value="F:4 iron, 4 sulfur cluster binding"/>
    <property type="evidence" value="ECO:0007669"/>
    <property type="project" value="UniProtKB-UniRule"/>
</dbReference>
<dbReference type="GO" id="GO:0051745">
    <property type="term" value="F:4-hydroxy-3-methylbut-2-enyl diphosphate reductase activity"/>
    <property type="evidence" value="ECO:0007669"/>
    <property type="project" value="UniProtKB-UniRule"/>
</dbReference>
<dbReference type="GO" id="GO:0046872">
    <property type="term" value="F:metal ion binding"/>
    <property type="evidence" value="ECO:0007669"/>
    <property type="project" value="UniProtKB-KW"/>
</dbReference>
<dbReference type="GO" id="GO:0050992">
    <property type="term" value="P:dimethylallyl diphosphate biosynthetic process"/>
    <property type="evidence" value="ECO:0007669"/>
    <property type="project" value="UniProtKB-UniRule"/>
</dbReference>
<dbReference type="GO" id="GO:0019288">
    <property type="term" value="P:isopentenyl diphosphate biosynthetic process, methylerythritol 4-phosphate pathway"/>
    <property type="evidence" value="ECO:0007669"/>
    <property type="project" value="UniProtKB-UniRule"/>
</dbReference>
<dbReference type="GO" id="GO:0016114">
    <property type="term" value="P:terpenoid biosynthetic process"/>
    <property type="evidence" value="ECO:0007669"/>
    <property type="project" value="UniProtKB-UniRule"/>
</dbReference>
<dbReference type="CDD" id="cd13944">
    <property type="entry name" value="lytB_ispH"/>
    <property type="match status" value="1"/>
</dbReference>
<dbReference type="Gene3D" id="3.40.50.11270">
    <property type="match status" value="1"/>
</dbReference>
<dbReference type="Gene3D" id="3.40.1010.20">
    <property type="entry name" value="4-hydroxy-3-methylbut-2-enyl diphosphate reductase, catalytic domain"/>
    <property type="match status" value="2"/>
</dbReference>
<dbReference type="HAMAP" id="MF_00191">
    <property type="entry name" value="IspH"/>
    <property type="match status" value="1"/>
</dbReference>
<dbReference type="InterPro" id="IPR003451">
    <property type="entry name" value="LytB/IspH"/>
</dbReference>
<dbReference type="NCBIfam" id="TIGR00216">
    <property type="entry name" value="ispH_lytB"/>
    <property type="match status" value="1"/>
</dbReference>
<dbReference type="NCBIfam" id="NF002187">
    <property type="entry name" value="PRK01045.1-1"/>
    <property type="match status" value="1"/>
</dbReference>
<dbReference type="PANTHER" id="PTHR30426">
    <property type="entry name" value="4-HYDROXY-3-METHYLBUT-2-ENYL DIPHOSPHATE REDUCTASE"/>
    <property type="match status" value="1"/>
</dbReference>
<dbReference type="PANTHER" id="PTHR30426:SF0">
    <property type="entry name" value="4-HYDROXY-3-METHYLBUT-2-ENYL DIPHOSPHATE REDUCTASE"/>
    <property type="match status" value="1"/>
</dbReference>
<dbReference type="Pfam" id="PF02401">
    <property type="entry name" value="LYTB"/>
    <property type="match status" value="1"/>
</dbReference>
<comment type="function">
    <text evidence="1">Catalyzes the conversion of 1-hydroxy-2-methyl-2-(E)-butenyl 4-diphosphate (HMBPP) into a mixture of isopentenyl diphosphate (IPP) and dimethylallyl diphosphate (DMAPP). Acts in the terminal step of the DOXP/MEP pathway for isoprenoid precursor biosynthesis.</text>
</comment>
<comment type="catalytic activity">
    <reaction evidence="1">
        <text>isopentenyl diphosphate + 2 oxidized [2Fe-2S]-[ferredoxin] + H2O = (2E)-4-hydroxy-3-methylbut-2-enyl diphosphate + 2 reduced [2Fe-2S]-[ferredoxin] + 2 H(+)</text>
        <dbReference type="Rhea" id="RHEA:24488"/>
        <dbReference type="Rhea" id="RHEA-COMP:10000"/>
        <dbReference type="Rhea" id="RHEA-COMP:10001"/>
        <dbReference type="ChEBI" id="CHEBI:15377"/>
        <dbReference type="ChEBI" id="CHEBI:15378"/>
        <dbReference type="ChEBI" id="CHEBI:33737"/>
        <dbReference type="ChEBI" id="CHEBI:33738"/>
        <dbReference type="ChEBI" id="CHEBI:128753"/>
        <dbReference type="ChEBI" id="CHEBI:128769"/>
        <dbReference type="EC" id="1.17.7.4"/>
    </reaction>
</comment>
<comment type="catalytic activity">
    <reaction evidence="1">
        <text>dimethylallyl diphosphate + 2 oxidized [2Fe-2S]-[ferredoxin] + H2O = (2E)-4-hydroxy-3-methylbut-2-enyl diphosphate + 2 reduced [2Fe-2S]-[ferredoxin] + 2 H(+)</text>
        <dbReference type="Rhea" id="RHEA:24825"/>
        <dbReference type="Rhea" id="RHEA-COMP:10000"/>
        <dbReference type="Rhea" id="RHEA-COMP:10001"/>
        <dbReference type="ChEBI" id="CHEBI:15377"/>
        <dbReference type="ChEBI" id="CHEBI:15378"/>
        <dbReference type="ChEBI" id="CHEBI:33737"/>
        <dbReference type="ChEBI" id="CHEBI:33738"/>
        <dbReference type="ChEBI" id="CHEBI:57623"/>
        <dbReference type="ChEBI" id="CHEBI:128753"/>
        <dbReference type="EC" id="1.17.7.4"/>
    </reaction>
</comment>
<comment type="cofactor">
    <cofactor evidence="1">
        <name>[4Fe-4S] cluster</name>
        <dbReference type="ChEBI" id="CHEBI:49883"/>
    </cofactor>
    <text evidence="1">Binds 1 [4Fe-4S] cluster per subunit.</text>
</comment>
<comment type="pathway">
    <text evidence="1">Isoprenoid biosynthesis; dimethylallyl diphosphate biosynthesis; dimethylallyl diphosphate from (2E)-4-hydroxy-3-methylbutenyl diphosphate: step 1/1.</text>
</comment>
<comment type="pathway">
    <text evidence="1">Isoprenoid biosynthesis; isopentenyl diphosphate biosynthesis via DXP pathway; isopentenyl diphosphate from 1-deoxy-D-xylulose 5-phosphate: step 6/6.</text>
</comment>
<comment type="similarity">
    <text evidence="1">Belongs to the IspH family.</text>
</comment>
<organism>
    <name type="scientific">Bacillus anthracis</name>
    <dbReference type="NCBI Taxonomy" id="1392"/>
    <lineage>
        <taxon>Bacteria</taxon>
        <taxon>Bacillati</taxon>
        <taxon>Bacillota</taxon>
        <taxon>Bacilli</taxon>
        <taxon>Bacillales</taxon>
        <taxon>Bacillaceae</taxon>
        <taxon>Bacillus</taxon>
        <taxon>Bacillus cereus group</taxon>
    </lineage>
</organism>
<feature type="chain" id="PRO_0000128768" description="4-hydroxy-3-methylbut-2-enyl diphosphate reductase">
    <location>
        <begin position="1"/>
        <end position="316"/>
    </location>
</feature>
<feature type="active site" description="Proton donor" evidence="1">
    <location>
        <position position="133"/>
    </location>
</feature>
<feature type="binding site" evidence="1">
    <location>
        <position position="12"/>
    </location>
    <ligand>
        <name>[4Fe-4S] cluster</name>
        <dbReference type="ChEBI" id="CHEBI:49883"/>
    </ligand>
</feature>
<feature type="binding site" evidence="1">
    <location>
        <position position="43"/>
    </location>
    <ligand>
        <name>(2E)-4-hydroxy-3-methylbut-2-enyl diphosphate</name>
        <dbReference type="ChEBI" id="CHEBI:128753"/>
    </ligand>
</feature>
<feature type="binding site" evidence="1">
    <location>
        <position position="43"/>
    </location>
    <ligand>
        <name>dimethylallyl diphosphate</name>
        <dbReference type="ChEBI" id="CHEBI:57623"/>
    </ligand>
</feature>
<feature type="binding site" evidence="1">
    <location>
        <position position="43"/>
    </location>
    <ligand>
        <name>isopentenyl diphosphate</name>
        <dbReference type="ChEBI" id="CHEBI:128769"/>
    </ligand>
</feature>
<feature type="binding site" evidence="1">
    <location>
        <position position="81"/>
    </location>
    <ligand>
        <name>(2E)-4-hydroxy-3-methylbut-2-enyl diphosphate</name>
        <dbReference type="ChEBI" id="CHEBI:128753"/>
    </ligand>
</feature>
<feature type="binding site" evidence="1">
    <location>
        <position position="81"/>
    </location>
    <ligand>
        <name>dimethylallyl diphosphate</name>
        <dbReference type="ChEBI" id="CHEBI:57623"/>
    </ligand>
</feature>
<feature type="binding site" evidence="1">
    <location>
        <position position="81"/>
    </location>
    <ligand>
        <name>isopentenyl diphosphate</name>
        <dbReference type="ChEBI" id="CHEBI:128769"/>
    </ligand>
</feature>
<feature type="binding site" evidence="1">
    <location>
        <position position="103"/>
    </location>
    <ligand>
        <name>[4Fe-4S] cluster</name>
        <dbReference type="ChEBI" id="CHEBI:49883"/>
    </ligand>
</feature>
<feature type="binding site" evidence="1">
    <location>
        <position position="131"/>
    </location>
    <ligand>
        <name>(2E)-4-hydroxy-3-methylbut-2-enyl diphosphate</name>
        <dbReference type="ChEBI" id="CHEBI:128753"/>
    </ligand>
</feature>
<feature type="binding site" evidence="1">
    <location>
        <position position="131"/>
    </location>
    <ligand>
        <name>dimethylallyl diphosphate</name>
        <dbReference type="ChEBI" id="CHEBI:57623"/>
    </ligand>
</feature>
<feature type="binding site" evidence="1">
    <location>
        <position position="131"/>
    </location>
    <ligand>
        <name>isopentenyl diphosphate</name>
        <dbReference type="ChEBI" id="CHEBI:128769"/>
    </ligand>
</feature>
<feature type="binding site" evidence="1">
    <location>
        <position position="170"/>
    </location>
    <ligand>
        <name>(2E)-4-hydroxy-3-methylbut-2-enyl diphosphate</name>
        <dbReference type="ChEBI" id="CHEBI:128753"/>
    </ligand>
</feature>
<feature type="binding site" evidence="1">
    <location>
        <position position="198"/>
    </location>
    <ligand>
        <name>[4Fe-4S] cluster</name>
        <dbReference type="ChEBI" id="CHEBI:49883"/>
    </ligand>
</feature>
<feature type="binding site" evidence="1">
    <location>
        <position position="226"/>
    </location>
    <ligand>
        <name>(2E)-4-hydroxy-3-methylbut-2-enyl diphosphate</name>
        <dbReference type="ChEBI" id="CHEBI:128753"/>
    </ligand>
</feature>
<feature type="binding site" evidence="1">
    <location>
        <position position="226"/>
    </location>
    <ligand>
        <name>dimethylallyl diphosphate</name>
        <dbReference type="ChEBI" id="CHEBI:57623"/>
    </ligand>
</feature>
<feature type="binding site" evidence="1">
    <location>
        <position position="226"/>
    </location>
    <ligand>
        <name>isopentenyl diphosphate</name>
        <dbReference type="ChEBI" id="CHEBI:128769"/>
    </ligand>
</feature>
<feature type="binding site" evidence="1">
    <location>
        <position position="228"/>
    </location>
    <ligand>
        <name>(2E)-4-hydroxy-3-methylbut-2-enyl diphosphate</name>
        <dbReference type="ChEBI" id="CHEBI:128753"/>
    </ligand>
</feature>
<feature type="binding site" evidence="1">
    <location>
        <position position="228"/>
    </location>
    <ligand>
        <name>dimethylallyl diphosphate</name>
        <dbReference type="ChEBI" id="CHEBI:57623"/>
    </ligand>
</feature>
<feature type="binding site" evidence="1">
    <location>
        <position position="228"/>
    </location>
    <ligand>
        <name>isopentenyl diphosphate</name>
        <dbReference type="ChEBI" id="CHEBI:128769"/>
    </ligand>
</feature>
<feature type="binding site" evidence="1">
    <location>
        <position position="271"/>
    </location>
    <ligand>
        <name>(2E)-4-hydroxy-3-methylbut-2-enyl diphosphate</name>
        <dbReference type="ChEBI" id="CHEBI:128753"/>
    </ligand>
</feature>
<feature type="binding site" evidence="1">
    <location>
        <position position="271"/>
    </location>
    <ligand>
        <name>dimethylallyl diphosphate</name>
        <dbReference type="ChEBI" id="CHEBI:57623"/>
    </ligand>
</feature>
<feature type="binding site" evidence="1">
    <location>
        <position position="271"/>
    </location>
    <ligand>
        <name>isopentenyl diphosphate</name>
        <dbReference type="ChEBI" id="CHEBI:128769"/>
    </ligand>
</feature>
<keyword id="KW-0004">4Fe-4S</keyword>
<keyword id="KW-0408">Iron</keyword>
<keyword id="KW-0411">Iron-sulfur</keyword>
<keyword id="KW-0414">Isoprene biosynthesis</keyword>
<keyword id="KW-0479">Metal-binding</keyword>
<keyword id="KW-0560">Oxidoreductase</keyword>
<keyword id="KW-1185">Reference proteome</keyword>
<reference key="1">
    <citation type="journal article" date="2003" name="Nature">
        <title>The genome sequence of Bacillus anthracis Ames and comparison to closely related bacteria.</title>
        <authorList>
            <person name="Read T.D."/>
            <person name="Peterson S.N."/>
            <person name="Tourasse N.J."/>
            <person name="Baillie L.W."/>
            <person name="Paulsen I.T."/>
            <person name="Nelson K.E."/>
            <person name="Tettelin H."/>
            <person name="Fouts D.E."/>
            <person name="Eisen J.A."/>
            <person name="Gill S.R."/>
            <person name="Holtzapple E.K."/>
            <person name="Okstad O.A."/>
            <person name="Helgason E."/>
            <person name="Rilstone J."/>
            <person name="Wu M."/>
            <person name="Kolonay J.F."/>
            <person name="Beanan M.J."/>
            <person name="Dodson R.J."/>
            <person name="Brinkac L.M."/>
            <person name="Gwinn M.L."/>
            <person name="DeBoy R.T."/>
            <person name="Madpu R."/>
            <person name="Daugherty S.C."/>
            <person name="Durkin A.S."/>
            <person name="Haft D.H."/>
            <person name="Nelson W.C."/>
            <person name="Peterson J.D."/>
            <person name="Pop M."/>
            <person name="Khouri H.M."/>
            <person name="Radune D."/>
            <person name="Benton J.L."/>
            <person name="Mahamoud Y."/>
            <person name="Jiang L."/>
            <person name="Hance I.R."/>
            <person name="Weidman J.F."/>
            <person name="Berry K.J."/>
            <person name="Plaut R.D."/>
            <person name="Wolf A.M."/>
            <person name="Watkins K.L."/>
            <person name="Nierman W.C."/>
            <person name="Hazen A."/>
            <person name="Cline R.T."/>
            <person name="Redmond C."/>
            <person name="Thwaite J.E."/>
            <person name="White O."/>
            <person name="Salzberg S.L."/>
            <person name="Thomason B."/>
            <person name="Friedlander A.M."/>
            <person name="Koehler T.M."/>
            <person name="Hanna P.C."/>
            <person name="Kolstoe A.-B."/>
            <person name="Fraser C.M."/>
        </authorList>
    </citation>
    <scope>NUCLEOTIDE SEQUENCE [LARGE SCALE GENOMIC DNA]</scope>
    <source>
        <strain>Ames / isolate Porton</strain>
    </source>
</reference>
<reference key="2">
    <citation type="journal article" date="2009" name="J. Bacteriol.">
        <title>The complete genome sequence of Bacillus anthracis Ames 'Ancestor'.</title>
        <authorList>
            <person name="Ravel J."/>
            <person name="Jiang L."/>
            <person name="Stanley S.T."/>
            <person name="Wilson M.R."/>
            <person name="Decker R.S."/>
            <person name="Read T.D."/>
            <person name="Worsham P."/>
            <person name="Keim P.S."/>
            <person name="Salzberg S.L."/>
            <person name="Fraser-Liggett C.M."/>
            <person name="Rasko D.A."/>
        </authorList>
    </citation>
    <scope>NUCLEOTIDE SEQUENCE [LARGE SCALE GENOMIC DNA]</scope>
    <source>
        <strain>Ames ancestor</strain>
    </source>
</reference>
<reference key="3">
    <citation type="submission" date="2004-01" db="EMBL/GenBank/DDBJ databases">
        <title>Complete genome sequence of Bacillus anthracis Sterne.</title>
        <authorList>
            <person name="Brettin T.S."/>
            <person name="Bruce D."/>
            <person name="Challacombe J.F."/>
            <person name="Gilna P."/>
            <person name="Han C."/>
            <person name="Hill K."/>
            <person name="Hitchcock P."/>
            <person name="Jackson P."/>
            <person name="Keim P."/>
            <person name="Longmire J."/>
            <person name="Lucas S."/>
            <person name="Okinaka R."/>
            <person name="Richardson P."/>
            <person name="Rubin E."/>
            <person name="Tice H."/>
        </authorList>
    </citation>
    <scope>NUCLEOTIDE SEQUENCE [LARGE SCALE GENOMIC DNA]</scope>
    <source>
        <strain>Sterne</strain>
    </source>
</reference>
<gene>
    <name evidence="1" type="primary">ispH</name>
    <name type="synonym">lytB</name>
    <name type="ordered locus">BA_4511</name>
    <name type="ordered locus">GBAA_4511</name>
    <name type="ordered locus">BAS4190</name>
</gene>
<sequence length="316" mass="34967">MKIVKISPRGYCYGVVDAMVIARNAALDTSLPRPIYILGMIVHNKHVTDAFEEDGIITLDGPSRLDILDKIDSGTVIFTAHGVSPEVKQRAKEKGLTTIDATCPDVTKTHDLIEAKKAEGYHVIYIGKKNHPEPEGAVGIAPDIVHLIERADDLKTLEIPTDKILVTNQTTMSQWDVQHLMEDIQKKFPTAEFHKEICLATQVRQEAVAKQADVADLTIVVGDPKSNNSNRLAQVSQEIAGTKAYRVADVSEIKLEWLQGVENVAVTAGASTPTPITKEVIAFLEQYDPMNPATWERVRKVPLQKILPRVKVKKEQ</sequence>
<evidence type="ECO:0000255" key="1">
    <source>
        <dbReference type="HAMAP-Rule" id="MF_00191"/>
    </source>
</evidence>
<protein>
    <recommendedName>
        <fullName evidence="1">4-hydroxy-3-methylbut-2-enyl diphosphate reductase</fullName>
        <shortName evidence="1">HMBPP reductase</shortName>
        <ecNumber evidence="1">1.17.7.4</ecNumber>
    </recommendedName>
</protein>
<name>ISPH_BACAN</name>
<proteinExistence type="inferred from homology"/>
<accession>Q81LU9</accession>
<accession>Q6HTA0</accession>
<accession>Q6KMJ3</accession>